<protein>
    <recommendedName>
        <fullName>Carboxypeptidase Y homolog A</fullName>
        <ecNumber>3.4.16.5</ecNumber>
    </recommendedName>
</protein>
<comment type="function">
    <text evidence="1">Vacuolar carboxypeptidase involved in degradation of small peptides. Digests preferentially peptides containing an aliphatic or hydrophobic residue in P1' position, as well as methionine, leucine or phenylalanine in P1 position of ester substrate (By similarity).</text>
</comment>
<comment type="catalytic activity">
    <reaction evidence="3">
        <text>Release of a C-terminal amino acid with broad specificity.</text>
        <dbReference type="EC" id="3.4.16.5"/>
    </reaction>
</comment>
<comment type="subcellular location">
    <subcellularLocation>
        <location evidence="1">Vacuole</location>
    </subcellularLocation>
</comment>
<comment type="similarity">
    <text evidence="4">Belongs to the peptidase S10 family.</text>
</comment>
<accession>E5A7I6</accession>
<gene>
    <name type="primary">CPYA</name>
    <name type="ORF">Lema_P088200</name>
</gene>
<dbReference type="EC" id="3.4.16.5"/>
<dbReference type="EMBL" id="FP929136">
    <property type="protein sequence ID" value="CBX99581.1"/>
    <property type="molecule type" value="Genomic_DNA"/>
</dbReference>
<dbReference type="RefSeq" id="XP_003843060.1">
    <property type="nucleotide sequence ID" value="XM_003843012.1"/>
</dbReference>
<dbReference type="SMR" id="E5A7I6"/>
<dbReference type="FunCoup" id="E5A7I6">
    <property type="interactions" value="792"/>
</dbReference>
<dbReference type="STRING" id="985895.E5A7I6"/>
<dbReference type="ESTHER" id="lepmj-cbpya">
    <property type="family name" value="Carboxypeptidase_S10"/>
</dbReference>
<dbReference type="MEROPS" id="S10.001"/>
<dbReference type="GlyCosmos" id="E5A7I6">
    <property type="glycosylation" value="3 sites, No reported glycans"/>
</dbReference>
<dbReference type="EnsemblFungi" id="CBX99581">
    <property type="protein sequence ID" value="CBX99581"/>
    <property type="gene ID" value="LEMA_P088200.1"/>
</dbReference>
<dbReference type="VEuPathDB" id="FungiDB:LEMA_P088200.1"/>
<dbReference type="eggNOG" id="KOG1282">
    <property type="taxonomic scope" value="Eukaryota"/>
</dbReference>
<dbReference type="HOGENOM" id="CLU_008523_10_4_1"/>
<dbReference type="InParanoid" id="E5A7I6"/>
<dbReference type="OMA" id="GDWMKPF"/>
<dbReference type="OrthoDB" id="443318at2759"/>
<dbReference type="Proteomes" id="UP000002668">
    <property type="component" value="Genome"/>
</dbReference>
<dbReference type="GO" id="GO:0000324">
    <property type="term" value="C:fungal-type vacuole"/>
    <property type="evidence" value="ECO:0007669"/>
    <property type="project" value="TreeGrafter"/>
</dbReference>
<dbReference type="GO" id="GO:0004185">
    <property type="term" value="F:serine-type carboxypeptidase activity"/>
    <property type="evidence" value="ECO:0007669"/>
    <property type="project" value="UniProtKB-EC"/>
</dbReference>
<dbReference type="GO" id="GO:0006508">
    <property type="term" value="P:proteolysis"/>
    <property type="evidence" value="ECO:0007669"/>
    <property type="project" value="UniProtKB-KW"/>
</dbReference>
<dbReference type="FunFam" id="1.10.287.410:FF:000001">
    <property type="entry name" value="Carboxypeptidase Y"/>
    <property type="match status" value="1"/>
</dbReference>
<dbReference type="Gene3D" id="1.10.287.410">
    <property type="match status" value="1"/>
</dbReference>
<dbReference type="Gene3D" id="3.40.50.1820">
    <property type="entry name" value="alpha/beta hydrolase"/>
    <property type="match status" value="1"/>
</dbReference>
<dbReference type="InterPro" id="IPR029058">
    <property type="entry name" value="AB_hydrolase_fold"/>
</dbReference>
<dbReference type="InterPro" id="IPR001563">
    <property type="entry name" value="Peptidase_S10"/>
</dbReference>
<dbReference type="InterPro" id="IPR008442">
    <property type="entry name" value="Propeptide_carboxypepY"/>
</dbReference>
<dbReference type="InterPro" id="IPR018202">
    <property type="entry name" value="Ser_caboxypep_ser_AS"/>
</dbReference>
<dbReference type="PANTHER" id="PTHR11802:SF113">
    <property type="entry name" value="SERINE CARBOXYPEPTIDASE CTSA-4.1"/>
    <property type="match status" value="1"/>
</dbReference>
<dbReference type="PANTHER" id="PTHR11802">
    <property type="entry name" value="SERINE PROTEASE FAMILY S10 SERINE CARBOXYPEPTIDASE"/>
    <property type="match status" value="1"/>
</dbReference>
<dbReference type="Pfam" id="PF05388">
    <property type="entry name" value="Carbpep_Y_N"/>
    <property type="match status" value="1"/>
</dbReference>
<dbReference type="Pfam" id="PF00450">
    <property type="entry name" value="Peptidase_S10"/>
    <property type="match status" value="1"/>
</dbReference>
<dbReference type="PRINTS" id="PR00724">
    <property type="entry name" value="CRBOXYPTASEC"/>
</dbReference>
<dbReference type="SUPFAM" id="SSF53474">
    <property type="entry name" value="alpha/beta-Hydrolases"/>
    <property type="match status" value="1"/>
</dbReference>
<dbReference type="PROSITE" id="PS00131">
    <property type="entry name" value="CARBOXYPEPT_SER_SER"/>
    <property type="match status" value="1"/>
</dbReference>
<proteinExistence type="inferred from homology"/>
<evidence type="ECO:0000250" key="1"/>
<evidence type="ECO:0000255" key="2"/>
<evidence type="ECO:0000255" key="3">
    <source>
        <dbReference type="PROSITE-ProRule" id="PRU10074"/>
    </source>
</evidence>
<evidence type="ECO:0000305" key="4"/>
<name>CBPYA_LEPMJ</name>
<keyword id="KW-0121">Carboxypeptidase</keyword>
<keyword id="KW-1015">Disulfide bond</keyword>
<keyword id="KW-0325">Glycoprotein</keyword>
<keyword id="KW-0378">Hydrolase</keyword>
<keyword id="KW-0645">Protease</keyword>
<keyword id="KW-1185">Reference proteome</keyword>
<keyword id="KW-0732">Signal</keyword>
<keyword id="KW-0926">Vacuole</keyword>
<keyword id="KW-0865">Zymogen</keyword>
<feature type="signal peptide" evidence="2">
    <location>
        <begin position="1"/>
        <end position="17"/>
    </location>
</feature>
<feature type="propeptide" id="PRO_0000407451" evidence="1">
    <location>
        <begin position="18"/>
        <end position="128"/>
    </location>
</feature>
<feature type="chain" id="PRO_0000407452" description="Carboxypeptidase Y homolog A">
    <location>
        <begin position="129"/>
        <end position="543"/>
    </location>
</feature>
<feature type="active site" evidence="3">
    <location>
        <position position="269"/>
    </location>
</feature>
<feature type="active site" evidence="3">
    <location>
        <position position="460"/>
    </location>
</feature>
<feature type="active site" evidence="3">
    <location>
        <position position="519"/>
    </location>
</feature>
<feature type="glycosylation site" description="N-linked (GlcNAc...) asparagine" evidence="2">
    <location>
        <position position="122"/>
    </location>
</feature>
<feature type="glycosylation site" description="N-linked (GlcNAc...) asparagine" evidence="2">
    <location>
        <position position="213"/>
    </location>
</feature>
<feature type="glycosylation site" description="N-linked (GlcNAc...) asparagine" evidence="2">
    <location>
        <position position="508"/>
    </location>
</feature>
<feature type="disulfide bond" evidence="1">
    <location>
        <begin position="182"/>
        <end position="421"/>
    </location>
</feature>
<feature type="disulfide bond" evidence="1">
    <location>
        <begin position="316"/>
        <end position="330"/>
    </location>
</feature>
<feature type="disulfide bond" evidence="1">
    <location>
        <begin position="340"/>
        <end position="363"/>
    </location>
</feature>
<feature type="disulfide bond" evidence="1">
    <location>
        <begin position="347"/>
        <end position="356"/>
    </location>
</feature>
<feature type="disulfide bond" evidence="1">
    <location>
        <begin position="385"/>
        <end position="391"/>
    </location>
</feature>
<organism>
    <name type="scientific">Leptosphaeria maculans (strain JN3 / isolate v23.1.3 / race Av1-4-5-6-7-8)</name>
    <name type="common">Blackleg fungus</name>
    <name type="synonym">Phoma lingam</name>
    <dbReference type="NCBI Taxonomy" id="985895"/>
    <lineage>
        <taxon>Eukaryota</taxon>
        <taxon>Fungi</taxon>
        <taxon>Dikarya</taxon>
        <taxon>Ascomycota</taxon>
        <taxon>Pezizomycotina</taxon>
        <taxon>Dothideomycetes</taxon>
        <taxon>Pleosporomycetidae</taxon>
        <taxon>Pleosporales</taxon>
        <taxon>Pleosporineae</taxon>
        <taxon>Leptosphaeriaceae</taxon>
        <taxon>Plenodomus</taxon>
        <taxon>Plenodomus lingam/Leptosphaeria maculans species complex</taxon>
    </lineage>
</organism>
<reference key="1">
    <citation type="journal article" date="2011" name="Nat. Commun.">
        <title>Effector diversification within compartments of the Leptosphaeria maculans genome affected by Repeat-Induced Point mutations.</title>
        <authorList>
            <person name="Rouxel T."/>
            <person name="Grandaubert J."/>
            <person name="Hane J.K."/>
            <person name="Hoede C."/>
            <person name="van de Wouw A.P."/>
            <person name="Couloux A."/>
            <person name="Dominguez V."/>
            <person name="Anthouard V."/>
            <person name="Bally P."/>
            <person name="Bourras S."/>
            <person name="Cozijnsen A.J."/>
            <person name="Ciuffetti L.M."/>
            <person name="Degrave A."/>
            <person name="Dilmaghani A."/>
            <person name="Duret L."/>
            <person name="Fudal I."/>
            <person name="Goodwin S.B."/>
            <person name="Gout L."/>
            <person name="Glaser N."/>
            <person name="Linglin J."/>
            <person name="Kema G.H.J."/>
            <person name="Lapalu N."/>
            <person name="Lawrence C.B."/>
            <person name="May K."/>
            <person name="Meyer M."/>
            <person name="Ollivier B."/>
            <person name="Poulain J."/>
            <person name="Schoch C.L."/>
            <person name="Simon A."/>
            <person name="Spatafora J.W."/>
            <person name="Stachowiak A."/>
            <person name="Turgeon B.G."/>
            <person name="Tyler B.M."/>
            <person name="Vincent D."/>
            <person name="Weissenbach J."/>
            <person name="Amselem J."/>
            <person name="Quesneville H."/>
            <person name="Oliver R.P."/>
            <person name="Wincker P."/>
            <person name="Balesdent M.-H."/>
            <person name="Howlett B.J."/>
        </authorList>
    </citation>
    <scope>NUCLEOTIDE SEQUENCE [LARGE SCALE GENOMIC DNA]</scope>
    <source>
        <strain>JN3 / isolate v23.1.3 / race Av1-4-5-6-7-8</strain>
    </source>
</reference>
<sequence>MKVATSALLVGAVSASVGPQQQVLKFPDSFSELKEGAWSKPLHKLEESLKTLTGEARAVWDEVAMMFPESFEKAAFFSEPKPHTRKHDSEWDHIIKGADIQNVWVENKNGDKEREIDGKLENYSMRTKKVDPSVLGVDKVKQYSGYLDDEEEDKHLFYWFFESRNDPKNDPVVLWLNGGPGCSSLTGLFMELGPASITKDGKIKHNPYSWNSNASVIFLDQPVNVGYSYSSGQVSNTVAAGKDIYALLTLFFKQFPEYAEQSFHISGESYAGHYIPVFASEILSHKKRNINLQSVLIGNGLTDGLTQYEYYRPMACGEGGWPAVLDESQCKAMDNAYPRCASLIENCYNSESVWSCVPASIYCNNAMIGPYQRTGQNVYDIRKPCGSNSLCYDELDWIQAYLNKKEVMKAVGAEISSYESCNFDINRNFLLQGDWMKPFHRIVPGLLAEIPVLIYAGDADYICNWLGNKAWTEALEWPGQKDYNKAEMEDFKIDGKGEAVGQVKSSGNFTFLKIHAGGHMVPYDQPEASLTMLNRWLAGDFWA</sequence>